<organism>
    <name type="scientific">Prochlorococcus marinus (strain MIT 9313)</name>
    <dbReference type="NCBI Taxonomy" id="74547"/>
    <lineage>
        <taxon>Bacteria</taxon>
        <taxon>Bacillati</taxon>
        <taxon>Cyanobacteriota</taxon>
        <taxon>Cyanophyceae</taxon>
        <taxon>Synechococcales</taxon>
        <taxon>Prochlorococcaceae</taxon>
        <taxon>Prochlorococcus</taxon>
    </lineage>
</organism>
<proteinExistence type="inferred from homology"/>
<feature type="chain" id="PRO_1000055671" description="Large ribosomal subunit protein uL14">
    <location>
        <begin position="1"/>
        <end position="121"/>
    </location>
</feature>
<accession>Q7TUP3</accession>
<gene>
    <name evidence="1" type="primary">rplN</name>
    <name evidence="1" type="synonym">rpl14</name>
    <name type="ordered locus">PMT_1742</name>
</gene>
<sequence>MIQQESFLTVADNSGAKRIQCIRVLGSNRRYAHVGDVIVAAVKDAMPNMSVKKSEVVKAVVVRTKATLRRDTGNSIRFDDNAAVLINEDKNPRGTRVFGPVARELRERNFTKIVSLAPEVI</sequence>
<reference key="1">
    <citation type="journal article" date="2003" name="Nature">
        <title>Genome divergence in two Prochlorococcus ecotypes reflects oceanic niche differentiation.</title>
        <authorList>
            <person name="Rocap G."/>
            <person name="Larimer F.W."/>
            <person name="Lamerdin J.E."/>
            <person name="Malfatti S."/>
            <person name="Chain P."/>
            <person name="Ahlgren N.A."/>
            <person name="Arellano A."/>
            <person name="Coleman M."/>
            <person name="Hauser L."/>
            <person name="Hess W.R."/>
            <person name="Johnson Z.I."/>
            <person name="Land M.L."/>
            <person name="Lindell D."/>
            <person name="Post A.F."/>
            <person name="Regala W."/>
            <person name="Shah M."/>
            <person name="Shaw S.L."/>
            <person name="Steglich C."/>
            <person name="Sullivan M.B."/>
            <person name="Ting C.S."/>
            <person name="Tolonen A."/>
            <person name="Webb E.A."/>
            <person name="Zinser E.R."/>
            <person name="Chisholm S.W."/>
        </authorList>
    </citation>
    <scope>NUCLEOTIDE SEQUENCE [LARGE SCALE GENOMIC DNA]</scope>
    <source>
        <strain>MIT 9313</strain>
    </source>
</reference>
<dbReference type="EMBL" id="BX548175">
    <property type="protein sequence ID" value="CAE21917.1"/>
    <property type="molecule type" value="Genomic_DNA"/>
</dbReference>
<dbReference type="RefSeq" id="WP_011131109.1">
    <property type="nucleotide sequence ID" value="NC_005071.1"/>
</dbReference>
<dbReference type="SMR" id="Q7TUP3"/>
<dbReference type="KEGG" id="pmt:PMT_1742"/>
<dbReference type="eggNOG" id="COG0093">
    <property type="taxonomic scope" value="Bacteria"/>
</dbReference>
<dbReference type="HOGENOM" id="CLU_095071_2_1_3"/>
<dbReference type="OrthoDB" id="9806379at2"/>
<dbReference type="Proteomes" id="UP000001423">
    <property type="component" value="Chromosome"/>
</dbReference>
<dbReference type="GO" id="GO:0022625">
    <property type="term" value="C:cytosolic large ribosomal subunit"/>
    <property type="evidence" value="ECO:0007669"/>
    <property type="project" value="TreeGrafter"/>
</dbReference>
<dbReference type="GO" id="GO:0070180">
    <property type="term" value="F:large ribosomal subunit rRNA binding"/>
    <property type="evidence" value="ECO:0007669"/>
    <property type="project" value="TreeGrafter"/>
</dbReference>
<dbReference type="GO" id="GO:0003735">
    <property type="term" value="F:structural constituent of ribosome"/>
    <property type="evidence" value="ECO:0007669"/>
    <property type="project" value="InterPro"/>
</dbReference>
<dbReference type="GO" id="GO:0006412">
    <property type="term" value="P:translation"/>
    <property type="evidence" value="ECO:0007669"/>
    <property type="project" value="UniProtKB-UniRule"/>
</dbReference>
<dbReference type="CDD" id="cd00337">
    <property type="entry name" value="Ribosomal_uL14"/>
    <property type="match status" value="1"/>
</dbReference>
<dbReference type="FunFam" id="2.40.150.20:FF:000001">
    <property type="entry name" value="50S ribosomal protein L14"/>
    <property type="match status" value="1"/>
</dbReference>
<dbReference type="Gene3D" id="2.40.150.20">
    <property type="entry name" value="Ribosomal protein L14"/>
    <property type="match status" value="1"/>
</dbReference>
<dbReference type="HAMAP" id="MF_01367">
    <property type="entry name" value="Ribosomal_uL14"/>
    <property type="match status" value="1"/>
</dbReference>
<dbReference type="InterPro" id="IPR000218">
    <property type="entry name" value="Ribosomal_uL14"/>
</dbReference>
<dbReference type="InterPro" id="IPR005745">
    <property type="entry name" value="Ribosomal_uL14_bac-type"/>
</dbReference>
<dbReference type="InterPro" id="IPR036853">
    <property type="entry name" value="Ribosomal_uL14_sf"/>
</dbReference>
<dbReference type="NCBIfam" id="TIGR01067">
    <property type="entry name" value="rplN_bact"/>
    <property type="match status" value="1"/>
</dbReference>
<dbReference type="PANTHER" id="PTHR11761">
    <property type="entry name" value="50S/60S RIBOSOMAL PROTEIN L14/L23"/>
    <property type="match status" value="1"/>
</dbReference>
<dbReference type="PANTHER" id="PTHR11761:SF3">
    <property type="entry name" value="LARGE RIBOSOMAL SUBUNIT PROTEIN UL14M"/>
    <property type="match status" value="1"/>
</dbReference>
<dbReference type="Pfam" id="PF00238">
    <property type="entry name" value="Ribosomal_L14"/>
    <property type="match status" value="1"/>
</dbReference>
<dbReference type="SMART" id="SM01374">
    <property type="entry name" value="Ribosomal_L14"/>
    <property type="match status" value="1"/>
</dbReference>
<dbReference type="SUPFAM" id="SSF50193">
    <property type="entry name" value="Ribosomal protein L14"/>
    <property type="match status" value="1"/>
</dbReference>
<protein>
    <recommendedName>
        <fullName evidence="1">Large ribosomal subunit protein uL14</fullName>
    </recommendedName>
    <alternativeName>
        <fullName evidence="2">50S ribosomal protein L14</fullName>
    </alternativeName>
</protein>
<evidence type="ECO:0000255" key="1">
    <source>
        <dbReference type="HAMAP-Rule" id="MF_01367"/>
    </source>
</evidence>
<evidence type="ECO:0000305" key="2"/>
<keyword id="KW-1185">Reference proteome</keyword>
<keyword id="KW-0687">Ribonucleoprotein</keyword>
<keyword id="KW-0689">Ribosomal protein</keyword>
<keyword id="KW-0694">RNA-binding</keyword>
<keyword id="KW-0699">rRNA-binding</keyword>
<comment type="function">
    <text evidence="1">Binds to 23S rRNA. Forms part of two intersubunit bridges in the 70S ribosome.</text>
</comment>
<comment type="subunit">
    <text evidence="1">Part of the 50S ribosomal subunit. Forms a cluster with proteins L3 and L19. In the 70S ribosome, L14 and L19 interact and together make contacts with the 16S rRNA in bridges B5 and B8.</text>
</comment>
<comment type="similarity">
    <text evidence="1">Belongs to the universal ribosomal protein uL14 family.</text>
</comment>
<name>RL14_PROMM</name>